<sequence>MTHMTSSNTARSAEWFEKAQKLTPGGVNSPVRAFGSVGGQARFIEKAHGSTLIDVDGNEYVDLVCSWGPMLMGHAHPAVVEAVQKAVVDGLSFGAPTIGEVELAQDIVKRTSVEEVRLVNSGTEATMSAVRLARGYTQRSKILKFEGCYHGHVDALLASAGSGVATFALPDSPGITGAQTSDTIVVPYNDIEAVRNAFAEYPGEIACIIAEAAGGNMGTVAPKDNFNDKLLAIAHADGALLILDEVMTGFRTSYRGWFGIDKVAADLVTFGKVVSGGLPAAAFGGKAEIMNMLAPQGPVYQAGTLSGNPVAVAAGRASLKLADESLYTTINANADRLHGLISDALTHEGVAHHIQRASNMLSIRFAEGEGHNFSDMKAADTFRFAPFFHTLLDNGVYAPPSVFETWFVSSALTDDDFSKIEQALKPAARAAAEAKAS</sequence>
<proteinExistence type="inferred from homology"/>
<accession>A4QB78</accession>
<reference key="1">
    <citation type="journal article" date="2007" name="Microbiology">
        <title>Comparative analysis of the Corynebacterium glutamicum group and complete genome sequence of strain R.</title>
        <authorList>
            <person name="Yukawa H."/>
            <person name="Omumasaba C.A."/>
            <person name="Nonaka H."/>
            <person name="Kos P."/>
            <person name="Okai N."/>
            <person name="Suzuki N."/>
            <person name="Suda M."/>
            <person name="Tsuge Y."/>
            <person name="Watanabe J."/>
            <person name="Ikeda Y."/>
            <person name="Vertes A.A."/>
            <person name="Inui M."/>
        </authorList>
    </citation>
    <scope>NUCLEOTIDE SEQUENCE [LARGE SCALE GENOMIC DNA]</scope>
    <source>
        <strain>R</strain>
    </source>
</reference>
<evidence type="ECO:0000255" key="1">
    <source>
        <dbReference type="HAMAP-Rule" id="MF_00375"/>
    </source>
</evidence>
<protein>
    <recommendedName>
        <fullName evidence="1">Glutamate-1-semialdehyde 2,1-aminomutase</fullName>
        <shortName evidence="1">GSA</shortName>
        <ecNumber evidence="1">5.4.3.8</ecNumber>
    </recommendedName>
    <alternativeName>
        <fullName evidence="1">Glutamate-1-semialdehyde aminotransferase</fullName>
        <shortName evidence="1">GSA-AT</shortName>
    </alternativeName>
</protein>
<organism>
    <name type="scientific">Corynebacterium glutamicum (strain R)</name>
    <dbReference type="NCBI Taxonomy" id="340322"/>
    <lineage>
        <taxon>Bacteria</taxon>
        <taxon>Bacillati</taxon>
        <taxon>Actinomycetota</taxon>
        <taxon>Actinomycetes</taxon>
        <taxon>Mycobacteriales</taxon>
        <taxon>Corynebacteriaceae</taxon>
        <taxon>Corynebacterium</taxon>
    </lineage>
</organism>
<gene>
    <name evidence="1" type="primary">hemL</name>
    <name type="ordered locus">cgR_0507</name>
</gene>
<name>GSA_CORGB</name>
<keyword id="KW-0963">Cytoplasm</keyword>
<keyword id="KW-0413">Isomerase</keyword>
<keyword id="KW-0627">Porphyrin biosynthesis</keyword>
<keyword id="KW-0663">Pyridoxal phosphate</keyword>
<feature type="chain" id="PRO_0000300904" description="Glutamate-1-semialdehyde 2,1-aminomutase">
    <location>
        <begin position="1"/>
        <end position="437"/>
    </location>
</feature>
<feature type="modified residue" description="N6-(pyridoxal phosphate)lysine" evidence="1">
    <location>
        <position position="272"/>
    </location>
</feature>
<dbReference type="EC" id="5.4.3.8" evidence="1"/>
<dbReference type="EMBL" id="AP009044">
    <property type="protein sequence ID" value="BAF53475.1"/>
    <property type="molecule type" value="Genomic_DNA"/>
</dbReference>
<dbReference type="RefSeq" id="WP_003855581.1">
    <property type="nucleotide sequence ID" value="NC_009342.1"/>
</dbReference>
<dbReference type="SMR" id="A4QB78"/>
<dbReference type="KEGG" id="cgt:cgR_0507"/>
<dbReference type="HOGENOM" id="CLU_016922_1_5_11"/>
<dbReference type="PhylomeDB" id="A4QB78"/>
<dbReference type="UniPathway" id="UPA00251">
    <property type="reaction ID" value="UER00317"/>
</dbReference>
<dbReference type="Proteomes" id="UP000006698">
    <property type="component" value="Chromosome"/>
</dbReference>
<dbReference type="GO" id="GO:0005737">
    <property type="term" value="C:cytoplasm"/>
    <property type="evidence" value="ECO:0007669"/>
    <property type="project" value="UniProtKB-SubCell"/>
</dbReference>
<dbReference type="GO" id="GO:0042286">
    <property type="term" value="F:glutamate-1-semialdehyde 2,1-aminomutase activity"/>
    <property type="evidence" value="ECO:0007669"/>
    <property type="project" value="UniProtKB-UniRule"/>
</dbReference>
<dbReference type="GO" id="GO:0030170">
    <property type="term" value="F:pyridoxal phosphate binding"/>
    <property type="evidence" value="ECO:0007669"/>
    <property type="project" value="InterPro"/>
</dbReference>
<dbReference type="GO" id="GO:0008483">
    <property type="term" value="F:transaminase activity"/>
    <property type="evidence" value="ECO:0007669"/>
    <property type="project" value="InterPro"/>
</dbReference>
<dbReference type="GO" id="GO:0006782">
    <property type="term" value="P:protoporphyrinogen IX biosynthetic process"/>
    <property type="evidence" value="ECO:0007669"/>
    <property type="project" value="UniProtKB-UniRule"/>
</dbReference>
<dbReference type="CDD" id="cd00610">
    <property type="entry name" value="OAT_like"/>
    <property type="match status" value="1"/>
</dbReference>
<dbReference type="FunFam" id="3.40.640.10:FF:000021">
    <property type="entry name" value="Glutamate-1-semialdehyde 2,1-aminomutase"/>
    <property type="match status" value="1"/>
</dbReference>
<dbReference type="Gene3D" id="3.90.1150.10">
    <property type="entry name" value="Aspartate Aminotransferase, domain 1"/>
    <property type="match status" value="1"/>
</dbReference>
<dbReference type="Gene3D" id="3.40.640.10">
    <property type="entry name" value="Type I PLP-dependent aspartate aminotransferase-like (Major domain)"/>
    <property type="match status" value="1"/>
</dbReference>
<dbReference type="HAMAP" id="MF_00375">
    <property type="entry name" value="HemL_aminotrans_3"/>
    <property type="match status" value="1"/>
</dbReference>
<dbReference type="InterPro" id="IPR004639">
    <property type="entry name" value="4pyrrol_synth_GluAld_NH2Trfase"/>
</dbReference>
<dbReference type="InterPro" id="IPR005814">
    <property type="entry name" value="Aminotrans_3"/>
</dbReference>
<dbReference type="InterPro" id="IPR049704">
    <property type="entry name" value="Aminotrans_3_PPA_site"/>
</dbReference>
<dbReference type="InterPro" id="IPR015424">
    <property type="entry name" value="PyrdxlP-dep_Trfase"/>
</dbReference>
<dbReference type="InterPro" id="IPR015421">
    <property type="entry name" value="PyrdxlP-dep_Trfase_major"/>
</dbReference>
<dbReference type="InterPro" id="IPR015422">
    <property type="entry name" value="PyrdxlP-dep_Trfase_small"/>
</dbReference>
<dbReference type="NCBIfam" id="TIGR00713">
    <property type="entry name" value="hemL"/>
    <property type="match status" value="1"/>
</dbReference>
<dbReference type="NCBIfam" id="NF000818">
    <property type="entry name" value="PRK00062.1"/>
    <property type="match status" value="1"/>
</dbReference>
<dbReference type="PANTHER" id="PTHR43713">
    <property type="entry name" value="GLUTAMATE-1-SEMIALDEHYDE 2,1-AMINOMUTASE"/>
    <property type="match status" value="1"/>
</dbReference>
<dbReference type="PANTHER" id="PTHR43713:SF3">
    <property type="entry name" value="GLUTAMATE-1-SEMIALDEHYDE 2,1-AMINOMUTASE 1, CHLOROPLASTIC-RELATED"/>
    <property type="match status" value="1"/>
</dbReference>
<dbReference type="Pfam" id="PF00202">
    <property type="entry name" value="Aminotran_3"/>
    <property type="match status" value="1"/>
</dbReference>
<dbReference type="SUPFAM" id="SSF53383">
    <property type="entry name" value="PLP-dependent transferases"/>
    <property type="match status" value="1"/>
</dbReference>
<dbReference type="PROSITE" id="PS00600">
    <property type="entry name" value="AA_TRANSFER_CLASS_3"/>
    <property type="match status" value="1"/>
</dbReference>
<comment type="catalytic activity">
    <reaction evidence="1">
        <text>(S)-4-amino-5-oxopentanoate = 5-aminolevulinate</text>
        <dbReference type="Rhea" id="RHEA:14265"/>
        <dbReference type="ChEBI" id="CHEBI:57501"/>
        <dbReference type="ChEBI" id="CHEBI:356416"/>
        <dbReference type="EC" id="5.4.3.8"/>
    </reaction>
</comment>
<comment type="cofactor">
    <cofactor evidence="1">
        <name>pyridoxal 5'-phosphate</name>
        <dbReference type="ChEBI" id="CHEBI:597326"/>
    </cofactor>
</comment>
<comment type="pathway">
    <text evidence="1">Porphyrin-containing compound metabolism; protoporphyrin-IX biosynthesis; 5-aminolevulinate from L-glutamyl-tRNA(Glu): step 2/2.</text>
</comment>
<comment type="subunit">
    <text evidence="1">Homodimer.</text>
</comment>
<comment type="subcellular location">
    <subcellularLocation>
        <location evidence="1">Cytoplasm</location>
    </subcellularLocation>
</comment>
<comment type="similarity">
    <text evidence="1">Belongs to the class-III pyridoxal-phosphate-dependent aminotransferase family. HemL subfamily.</text>
</comment>